<organism>
    <name type="scientific">Sinorhizobium medicae (strain WSM419)</name>
    <name type="common">Ensifer medicae</name>
    <dbReference type="NCBI Taxonomy" id="366394"/>
    <lineage>
        <taxon>Bacteria</taxon>
        <taxon>Pseudomonadati</taxon>
        <taxon>Pseudomonadota</taxon>
        <taxon>Alphaproteobacteria</taxon>
        <taxon>Hyphomicrobiales</taxon>
        <taxon>Rhizobiaceae</taxon>
        <taxon>Sinorhizobium/Ensifer group</taxon>
        <taxon>Sinorhizobium</taxon>
    </lineage>
</organism>
<keyword id="KW-0106">Calcium</keyword>
<keyword id="KW-0113">Calvin cycle</keyword>
<keyword id="KW-0460">Magnesium</keyword>
<keyword id="KW-0479">Metal-binding</keyword>
<keyword id="KW-0614">Plasmid</keyword>
<keyword id="KW-0786">Thiamine pyrophosphate</keyword>
<keyword id="KW-0808">Transferase</keyword>
<accession>P56900</accession>
<accession>A6UGF2</accession>
<comment type="function">
    <text evidence="1">Catalyzes the transfer of a two-carbon ketol group from a ketose donor to an aldose acceptor, via a covalent intermediate with the cofactor thiamine pyrophosphate.</text>
</comment>
<comment type="catalytic activity">
    <reaction>
        <text>D-sedoheptulose 7-phosphate + D-glyceraldehyde 3-phosphate = aldehydo-D-ribose 5-phosphate + D-xylulose 5-phosphate</text>
        <dbReference type="Rhea" id="RHEA:10508"/>
        <dbReference type="ChEBI" id="CHEBI:57483"/>
        <dbReference type="ChEBI" id="CHEBI:57737"/>
        <dbReference type="ChEBI" id="CHEBI:58273"/>
        <dbReference type="ChEBI" id="CHEBI:59776"/>
        <dbReference type="EC" id="2.2.1.1"/>
    </reaction>
</comment>
<comment type="cofactor">
    <cofactor evidence="1">
        <name>Mg(2+)</name>
        <dbReference type="ChEBI" id="CHEBI:18420"/>
    </cofactor>
    <cofactor evidence="1">
        <name>Ca(2+)</name>
        <dbReference type="ChEBI" id="CHEBI:29108"/>
    </cofactor>
    <cofactor evidence="1">
        <name>Mn(2+)</name>
        <dbReference type="ChEBI" id="CHEBI:29035"/>
    </cofactor>
    <cofactor evidence="1">
        <name>Co(2+)</name>
        <dbReference type="ChEBI" id="CHEBI:48828"/>
    </cofactor>
    <text evidence="1">Binds 1 Mg(2+) ion per subunit. Can also utilize other divalent metal cations, such as Ca(2+), Mn(2+) and Co(2+).</text>
</comment>
<comment type="cofactor">
    <cofactor evidence="1">
        <name>thiamine diphosphate</name>
        <dbReference type="ChEBI" id="CHEBI:58937"/>
    </cofactor>
    <text evidence="1">Binds 1 thiamine pyrophosphate per subunit.</text>
</comment>
<comment type="pathway">
    <text>Carbohydrate biosynthesis; Calvin cycle.</text>
</comment>
<comment type="subunit">
    <text evidence="1">Homodimer.</text>
</comment>
<comment type="similarity">
    <text evidence="2">Belongs to the transketolase family.</text>
</comment>
<protein>
    <recommendedName>
        <fullName>Transketolase</fullName>
        <shortName>TK</shortName>
        <ecNumber>2.2.1.1</ecNumber>
    </recommendedName>
</protein>
<geneLocation type="plasmid">
    <name>pSMED01</name>
</geneLocation>
<dbReference type="EC" id="2.2.1.1"/>
<dbReference type="EMBL" id="AF211846">
    <property type="protein sequence ID" value="AAF25377.1"/>
    <property type="molecule type" value="Genomic_DNA"/>
</dbReference>
<dbReference type="EMBL" id="CP000739">
    <property type="protein sequence ID" value="ABR62732.1"/>
    <property type="molecule type" value="Genomic_DNA"/>
</dbReference>
<dbReference type="RefSeq" id="YP_001312665.1">
    <property type="nucleotide sequence ID" value="NC_009620.1"/>
</dbReference>
<dbReference type="SMR" id="P56900"/>
<dbReference type="KEGG" id="smd:Smed_3922"/>
<dbReference type="PATRIC" id="fig|366394.8.peg.368"/>
<dbReference type="HOGENOM" id="CLU_009227_0_0_5"/>
<dbReference type="OrthoDB" id="8732661at2"/>
<dbReference type="UniPathway" id="UPA00116"/>
<dbReference type="Proteomes" id="UP000001108">
    <property type="component" value="Plasmid pSMED01"/>
</dbReference>
<dbReference type="GO" id="GO:0005829">
    <property type="term" value="C:cytosol"/>
    <property type="evidence" value="ECO:0007669"/>
    <property type="project" value="TreeGrafter"/>
</dbReference>
<dbReference type="GO" id="GO:0046872">
    <property type="term" value="F:metal ion binding"/>
    <property type="evidence" value="ECO:0007669"/>
    <property type="project" value="UniProtKB-KW"/>
</dbReference>
<dbReference type="GO" id="GO:0004802">
    <property type="term" value="F:transketolase activity"/>
    <property type="evidence" value="ECO:0007669"/>
    <property type="project" value="UniProtKB-EC"/>
</dbReference>
<dbReference type="GO" id="GO:0006098">
    <property type="term" value="P:pentose-phosphate shunt"/>
    <property type="evidence" value="ECO:0007669"/>
    <property type="project" value="TreeGrafter"/>
</dbReference>
<dbReference type="GO" id="GO:0019253">
    <property type="term" value="P:reductive pentose-phosphate cycle"/>
    <property type="evidence" value="ECO:0007669"/>
    <property type="project" value="UniProtKB-UniPathway"/>
</dbReference>
<dbReference type="CDD" id="cd07033">
    <property type="entry name" value="TPP_PYR_DXS_TK_like"/>
    <property type="match status" value="1"/>
</dbReference>
<dbReference type="CDD" id="cd02012">
    <property type="entry name" value="TPP_TK"/>
    <property type="match status" value="1"/>
</dbReference>
<dbReference type="FunFam" id="3.40.50.920:FF:000003">
    <property type="entry name" value="Transketolase"/>
    <property type="match status" value="1"/>
</dbReference>
<dbReference type="FunFam" id="3.40.50.970:FF:000003">
    <property type="entry name" value="Transketolase"/>
    <property type="match status" value="1"/>
</dbReference>
<dbReference type="FunFam" id="3.40.50.970:FF:000004">
    <property type="entry name" value="Transketolase"/>
    <property type="match status" value="1"/>
</dbReference>
<dbReference type="Gene3D" id="3.40.50.920">
    <property type="match status" value="1"/>
</dbReference>
<dbReference type="Gene3D" id="3.40.50.970">
    <property type="match status" value="2"/>
</dbReference>
<dbReference type="InterPro" id="IPR029061">
    <property type="entry name" value="THDP-binding"/>
</dbReference>
<dbReference type="InterPro" id="IPR009014">
    <property type="entry name" value="Transketo_C/PFOR_II"/>
</dbReference>
<dbReference type="InterPro" id="IPR055152">
    <property type="entry name" value="Transketolase-like_C_2"/>
</dbReference>
<dbReference type="InterPro" id="IPR005475">
    <property type="entry name" value="Transketolase-like_Pyr-bd"/>
</dbReference>
<dbReference type="InterPro" id="IPR005478">
    <property type="entry name" value="Transketolase_bac-like"/>
</dbReference>
<dbReference type="InterPro" id="IPR020826">
    <property type="entry name" value="Transketolase_BS"/>
</dbReference>
<dbReference type="InterPro" id="IPR049557">
    <property type="entry name" value="Transketolase_CS"/>
</dbReference>
<dbReference type="InterPro" id="IPR033247">
    <property type="entry name" value="Transketolase_fam"/>
</dbReference>
<dbReference type="InterPro" id="IPR005474">
    <property type="entry name" value="Transketolase_N"/>
</dbReference>
<dbReference type="NCBIfam" id="TIGR00232">
    <property type="entry name" value="tktlase_bact"/>
    <property type="match status" value="1"/>
</dbReference>
<dbReference type="PANTHER" id="PTHR43522">
    <property type="entry name" value="TRANSKETOLASE"/>
    <property type="match status" value="1"/>
</dbReference>
<dbReference type="PANTHER" id="PTHR43522:SF2">
    <property type="entry name" value="TRANSKETOLASE 1-RELATED"/>
    <property type="match status" value="1"/>
</dbReference>
<dbReference type="Pfam" id="PF02779">
    <property type="entry name" value="Transket_pyr"/>
    <property type="match status" value="1"/>
</dbReference>
<dbReference type="Pfam" id="PF22613">
    <property type="entry name" value="Transketolase_C_1"/>
    <property type="match status" value="1"/>
</dbReference>
<dbReference type="Pfam" id="PF00456">
    <property type="entry name" value="Transketolase_N"/>
    <property type="match status" value="1"/>
</dbReference>
<dbReference type="SMART" id="SM00861">
    <property type="entry name" value="Transket_pyr"/>
    <property type="match status" value="1"/>
</dbReference>
<dbReference type="SUPFAM" id="SSF52518">
    <property type="entry name" value="Thiamin diphosphate-binding fold (THDP-binding)"/>
    <property type="match status" value="2"/>
</dbReference>
<dbReference type="SUPFAM" id="SSF52922">
    <property type="entry name" value="TK C-terminal domain-like"/>
    <property type="match status" value="1"/>
</dbReference>
<dbReference type="PROSITE" id="PS00801">
    <property type="entry name" value="TRANSKETOLASE_1"/>
    <property type="match status" value="1"/>
</dbReference>
<dbReference type="PROSITE" id="PS00802">
    <property type="entry name" value="TRANSKETOLASE_2"/>
    <property type="match status" value="1"/>
</dbReference>
<gene>
    <name type="primary">cbbT</name>
    <name type="ordered locus">Smed_3922</name>
</gene>
<feature type="chain" id="PRO_0000191867" description="Transketolase">
    <location>
        <begin position="1"/>
        <end position="695"/>
    </location>
</feature>
<feature type="active site" description="Proton donor" evidence="1">
    <location>
        <position position="415"/>
    </location>
</feature>
<feature type="binding site" evidence="1">
    <location>
        <position position="37"/>
    </location>
    <ligand>
        <name>substrate</name>
    </ligand>
</feature>
<feature type="binding site" evidence="1">
    <location>
        <position position="77"/>
    </location>
    <ligand>
        <name>thiamine diphosphate</name>
        <dbReference type="ChEBI" id="CHEBI:58937"/>
    </ligand>
</feature>
<feature type="binding site" evidence="1">
    <location>
        <begin position="126"/>
        <end position="128"/>
    </location>
    <ligand>
        <name>thiamine diphosphate</name>
        <dbReference type="ChEBI" id="CHEBI:58937"/>
    </ligand>
</feature>
<feature type="binding site" evidence="1">
    <location>
        <position position="164"/>
    </location>
    <ligand>
        <name>Mg(2+)</name>
        <dbReference type="ChEBI" id="CHEBI:18420"/>
    </ligand>
</feature>
<feature type="binding site" evidence="1">
    <location>
        <position position="165"/>
    </location>
    <ligand>
        <name>thiamine diphosphate</name>
        <dbReference type="ChEBI" id="CHEBI:58937"/>
    </ligand>
</feature>
<feature type="binding site" evidence="1">
    <location>
        <position position="194"/>
    </location>
    <ligand>
        <name>Mg(2+)</name>
        <dbReference type="ChEBI" id="CHEBI:18420"/>
    </ligand>
</feature>
<feature type="binding site" evidence="1">
    <location>
        <position position="194"/>
    </location>
    <ligand>
        <name>thiamine diphosphate</name>
        <dbReference type="ChEBI" id="CHEBI:58937"/>
    </ligand>
</feature>
<feature type="binding site" evidence="1">
    <location>
        <position position="196"/>
    </location>
    <ligand>
        <name>Mg(2+)</name>
        <dbReference type="ChEBI" id="CHEBI:18420"/>
    </ligand>
</feature>
<feature type="binding site" evidence="1">
    <location>
        <position position="268"/>
    </location>
    <ligand>
        <name>substrate</name>
    </ligand>
</feature>
<feature type="binding site" evidence="1">
    <location>
        <position position="268"/>
    </location>
    <ligand>
        <name>thiamine diphosphate</name>
        <dbReference type="ChEBI" id="CHEBI:58937"/>
    </ligand>
</feature>
<feature type="binding site" evidence="1">
    <location>
        <position position="361"/>
    </location>
    <ligand>
        <name>substrate</name>
    </ligand>
</feature>
<feature type="binding site" evidence="1">
    <location>
        <position position="388"/>
    </location>
    <ligand>
        <name>substrate</name>
    </ligand>
</feature>
<feature type="binding site" evidence="1">
    <location>
        <position position="441"/>
    </location>
    <ligand>
        <name>thiamine diphosphate</name>
        <dbReference type="ChEBI" id="CHEBI:58937"/>
    </ligand>
</feature>
<feature type="binding site" evidence="1">
    <location>
        <position position="465"/>
    </location>
    <ligand>
        <name>substrate</name>
    </ligand>
</feature>
<feature type="binding site" evidence="1">
    <location>
        <position position="473"/>
    </location>
    <ligand>
        <name>substrate</name>
    </ligand>
</feature>
<feature type="binding site" evidence="1">
    <location>
        <position position="524"/>
    </location>
    <ligand>
        <name>substrate</name>
    </ligand>
</feature>
<feature type="site" description="Important for catalytic activity" evidence="1">
    <location>
        <position position="37"/>
    </location>
</feature>
<feature type="site" description="Important for catalytic activity" evidence="1">
    <location>
        <position position="268"/>
    </location>
</feature>
<feature type="sequence conflict" description="In Ref. 1; AAF25377." evidence="2" ref="1">
    <original>S</original>
    <variation>W</variation>
    <location>
        <position position="14"/>
    </location>
</feature>
<feature type="sequence conflict" description="In Ref. 1; AAF25377." evidence="2" ref="1">
    <original>I</original>
    <variation>M</variation>
    <location>
        <position position="132"/>
    </location>
</feature>
<feature type="sequence conflict" description="In Ref. 1; AAF25377." evidence="2" ref="1">
    <original>A</original>
    <variation>V</variation>
    <location>
        <position position="152"/>
    </location>
</feature>
<feature type="sequence conflict" description="In Ref. 1; AAF25377." evidence="2" ref="1">
    <original>AI</original>
    <variation>VM</variation>
    <location>
        <begin position="175"/>
        <end position="176"/>
    </location>
</feature>
<feature type="sequence conflict" description="In Ref. 1; AAF25377." evidence="2" ref="1">
    <original>V</original>
    <variation>F</variation>
    <location>
        <position position="188"/>
    </location>
</feature>
<feature type="sequence conflict" description="In Ref. 1; AAF25377." evidence="2" ref="1">
    <original>S</original>
    <variation>W</variation>
    <location>
        <position position="207"/>
    </location>
</feature>
<feature type="sequence conflict" description="In Ref. 1; AAF25377." evidence="2" ref="1">
    <original>L</original>
    <variation>F</variation>
    <location>
        <position position="211"/>
    </location>
</feature>
<feature type="sequence conflict" description="In Ref. 1; AAF25377." evidence="2" ref="1">
    <original>S</original>
    <variation>W</variation>
    <location>
        <position position="382"/>
    </location>
</feature>
<feature type="sequence conflict" description="In Ref. 1; AAF25377." evidence="2" ref="1">
    <original>L</original>
    <variation>R</variation>
    <location>
        <position position="385"/>
    </location>
</feature>
<feature type="sequence conflict" description="In Ref. 1; AAF25377." evidence="2" ref="1">
    <original>E</original>
    <variation>Q</variation>
    <location>
        <position position="415"/>
    </location>
</feature>
<feature type="sequence conflict" description="In Ref. 1; AAF25377." evidence="2" ref="1">
    <original>LTH</original>
    <variation>KKK</variation>
    <location>
        <begin position="463"/>
        <end position="465"/>
    </location>
</feature>
<sequence>MNVSQQIEPRAAASERNMADAIRFLSMDAVEKANSGHPGMPMGMADAVTVLFNRFIRIDPSLPDWPDRDRFVLSAGHGSMLLYSLHHLIGFADMPMAELSSFRQLGSKTAGHPEYGHALGIETTTGPLGQGISTAVGMAMAEQMMASRFGSALCNHFTYVVAGDGCLQEGISHEAIDLAGHLKLRKLVVLWDDNRISIDGSTDLSTSMNQLARFRAASWDAQAVDGHDPEAVAKALERARRTRKPSLIACRTRIGKGAASMEGSHKTHGAALGDKEIAATREKLGWPHPPFFVPPEIRAAWAKVAARGRTAREAWDIRLDASRSKKRYEQTIRRQFDGELGDLLAKFRSAHRTRATKVATRQASQMALEVINGATALTIGGSADLTGSNLTMTSQTQPISPGNFKGRYLHYGIREHGMAAAMNGIALHGGFIPYGGTFLVFSDYARGAMRLSALMGLPVIYVLTHDSIGLGEDGPTHQPVEHLAMLRATPNLNVFRPADIIETAECWEIALGEKNTPSVLALSRQALPMLRRTEGNENQSALGAYVLREARGNRDITILATGSEVEIAVAAAERLQAEEGIAAAVVSMPCWEKFEVQDLAYRRKVLGDAPRIAIEAAGRLGWDRWMGPDGAFVGMTGFGASAPAGDLYRHFGITADHVVAEALELLRRAYSETLPIGARIGPHPSAHTVRSSQEA</sequence>
<evidence type="ECO:0000250" key="1"/>
<evidence type="ECO:0000305" key="2"/>
<reference key="1">
    <citation type="submission" date="1999-12" db="EMBL/GenBank/DDBJ databases">
        <title>Genetic regulation of C1 metabolism in Sinorhizobium meliloti.</title>
        <authorList>
            <person name="Fenner B.J."/>
            <person name="Tiwari R.P."/>
            <person name="Dilworth M.J."/>
        </authorList>
    </citation>
    <scope>NUCLEOTIDE SEQUENCE [GENOMIC DNA]</scope>
</reference>
<reference key="2">
    <citation type="submission" date="2007-06" db="EMBL/GenBank/DDBJ databases">
        <title>Complete sequence of Sinorhizobium medicae WSM419 plasmid pSMED01.</title>
        <authorList>
            <consortium name="US DOE Joint Genome Institute"/>
            <person name="Copeland A."/>
            <person name="Lucas S."/>
            <person name="Lapidus A."/>
            <person name="Barry K."/>
            <person name="Glavina del Rio T."/>
            <person name="Dalin E."/>
            <person name="Tice H."/>
            <person name="Pitluck S."/>
            <person name="Chain P."/>
            <person name="Malfatti S."/>
            <person name="Shin M."/>
            <person name="Vergez L."/>
            <person name="Schmutz J."/>
            <person name="Larimer F."/>
            <person name="Land M."/>
            <person name="Hauser L."/>
            <person name="Kyrpides N."/>
            <person name="Mikhailova N."/>
            <person name="Reeve W.G."/>
            <person name="Richardson P."/>
        </authorList>
    </citation>
    <scope>NUCLEOTIDE SEQUENCE [LARGE SCALE GENOMIC DNA]</scope>
    <source>
        <strain>WSM419</strain>
    </source>
</reference>
<proteinExistence type="inferred from homology"/>
<name>TKT_SINMW</name>